<keyword id="KW-0520">NAD</keyword>
<keyword id="KW-0560">Oxidoreductase</keyword>
<keyword id="KW-1185">Reference proteome</keyword>
<accession>P77161</accession>
<accession>Q2MBR9</accession>
<dbReference type="EC" id="1.1.1.60"/>
<dbReference type="EMBL" id="U89279">
    <property type="protein sequence ID" value="AAB93851.1"/>
    <property type="molecule type" value="Genomic_DNA"/>
</dbReference>
<dbReference type="EMBL" id="U82664">
    <property type="protein sequence ID" value="AAB40262.1"/>
    <property type="molecule type" value="Genomic_DNA"/>
</dbReference>
<dbReference type="EMBL" id="U00096">
    <property type="protein sequence ID" value="AAC73611.1"/>
    <property type="molecule type" value="Genomic_DNA"/>
</dbReference>
<dbReference type="EMBL" id="AP009048">
    <property type="protein sequence ID" value="BAE76287.1"/>
    <property type="molecule type" value="Genomic_DNA"/>
</dbReference>
<dbReference type="PIR" id="D64782">
    <property type="entry name" value="D64782"/>
</dbReference>
<dbReference type="RefSeq" id="NP_415042.1">
    <property type="nucleotide sequence ID" value="NC_000913.3"/>
</dbReference>
<dbReference type="RefSeq" id="WP_000765839.1">
    <property type="nucleotide sequence ID" value="NZ_STEB01000007.1"/>
</dbReference>
<dbReference type="SMR" id="P77161"/>
<dbReference type="BioGRID" id="4262821">
    <property type="interactions" value="21"/>
</dbReference>
<dbReference type="BioGRID" id="849534">
    <property type="interactions" value="4"/>
</dbReference>
<dbReference type="FunCoup" id="P77161">
    <property type="interactions" value="646"/>
</dbReference>
<dbReference type="IntAct" id="P77161">
    <property type="interactions" value="9"/>
</dbReference>
<dbReference type="STRING" id="511145.b0509"/>
<dbReference type="PaxDb" id="511145-b0509"/>
<dbReference type="EnsemblBacteria" id="AAC73611">
    <property type="protein sequence ID" value="AAC73611"/>
    <property type="gene ID" value="b0509"/>
</dbReference>
<dbReference type="GeneID" id="945146"/>
<dbReference type="KEGG" id="ecj:JW0497"/>
<dbReference type="KEGG" id="eco:b0509"/>
<dbReference type="KEGG" id="ecoc:C3026_02500"/>
<dbReference type="PATRIC" id="fig|1411691.4.peg.1768"/>
<dbReference type="EchoBASE" id="EB3052"/>
<dbReference type="eggNOG" id="COG2084">
    <property type="taxonomic scope" value="Bacteria"/>
</dbReference>
<dbReference type="HOGENOM" id="CLU_035117_1_0_6"/>
<dbReference type="InParanoid" id="P77161"/>
<dbReference type="OMA" id="NALGCEY"/>
<dbReference type="OrthoDB" id="9786703at2"/>
<dbReference type="PhylomeDB" id="P77161"/>
<dbReference type="BioCyc" id="EcoCyc:G6278-MONOMER"/>
<dbReference type="BioCyc" id="MetaCyc:G6278-MONOMER"/>
<dbReference type="SABIO-RK" id="P77161"/>
<dbReference type="UniPathway" id="UPA00864">
    <property type="reaction ID" value="UER00832"/>
</dbReference>
<dbReference type="PRO" id="PR:P77161"/>
<dbReference type="Proteomes" id="UP000000625">
    <property type="component" value="Chromosome"/>
</dbReference>
<dbReference type="GO" id="GO:0008679">
    <property type="term" value="F:2-hydroxy-3-oxopropionate reductase activity"/>
    <property type="evidence" value="ECO:0000314"/>
    <property type="project" value="EcoCyc"/>
</dbReference>
<dbReference type="GO" id="GO:0051287">
    <property type="term" value="F:NAD binding"/>
    <property type="evidence" value="ECO:0007669"/>
    <property type="project" value="InterPro"/>
</dbReference>
<dbReference type="GO" id="GO:0050661">
    <property type="term" value="F:NADP binding"/>
    <property type="evidence" value="ECO:0007669"/>
    <property type="project" value="InterPro"/>
</dbReference>
<dbReference type="GO" id="GO:0009442">
    <property type="term" value="P:allantoin assimilation pathway"/>
    <property type="evidence" value="ECO:0000270"/>
    <property type="project" value="EcoCyc"/>
</dbReference>
<dbReference type="GO" id="GO:0006974">
    <property type="term" value="P:DNA damage response"/>
    <property type="evidence" value="ECO:0000270"/>
    <property type="project" value="EcoliWiki"/>
</dbReference>
<dbReference type="GO" id="GO:0046296">
    <property type="term" value="P:glycolate catabolic process"/>
    <property type="evidence" value="ECO:0007669"/>
    <property type="project" value="UniProtKB-UniPathway"/>
</dbReference>
<dbReference type="GO" id="GO:0009436">
    <property type="term" value="P:glyoxylate catabolic process"/>
    <property type="evidence" value="ECO:0000315"/>
    <property type="project" value="EcoCyc"/>
</dbReference>
<dbReference type="FunFam" id="1.10.1040.10:FF:000021">
    <property type="entry name" value="2-hydroxy-3-oxopropionate reductase"/>
    <property type="match status" value="1"/>
</dbReference>
<dbReference type="FunFam" id="3.40.50.720:FF:000218">
    <property type="entry name" value="2-hydroxy-3-oxopropionate reductase"/>
    <property type="match status" value="1"/>
</dbReference>
<dbReference type="Gene3D" id="1.10.1040.10">
    <property type="entry name" value="N-(1-d-carboxylethyl)-l-norvaline Dehydrogenase, domain 2"/>
    <property type="match status" value="1"/>
</dbReference>
<dbReference type="Gene3D" id="3.40.50.720">
    <property type="entry name" value="NAD(P)-binding Rossmann-like Domain"/>
    <property type="match status" value="1"/>
</dbReference>
<dbReference type="InterPro" id="IPR002204">
    <property type="entry name" value="3-OH-isobutyrate_DH-rel_CS"/>
</dbReference>
<dbReference type="InterPro" id="IPR008927">
    <property type="entry name" value="6-PGluconate_DH-like_C_sf"/>
</dbReference>
<dbReference type="InterPro" id="IPR013328">
    <property type="entry name" value="6PGD_dom2"/>
</dbReference>
<dbReference type="InterPro" id="IPR006115">
    <property type="entry name" value="6PGDH_NADP-bd"/>
</dbReference>
<dbReference type="InterPro" id="IPR029154">
    <property type="entry name" value="HIBADH-like_NADP-bd"/>
</dbReference>
<dbReference type="InterPro" id="IPR015815">
    <property type="entry name" value="HIBADH-related"/>
</dbReference>
<dbReference type="InterPro" id="IPR036291">
    <property type="entry name" value="NAD(P)-bd_dom_sf"/>
</dbReference>
<dbReference type="InterPro" id="IPR006398">
    <property type="entry name" value="Tartro_sem_red"/>
</dbReference>
<dbReference type="NCBIfam" id="NF011633">
    <property type="entry name" value="PRK15059.1"/>
    <property type="match status" value="1"/>
</dbReference>
<dbReference type="NCBIfam" id="TIGR01505">
    <property type="entry name" value="tartro_sem_red"/>
    <property type="match status" value="1"/>
</dbReference>
<dbReference type="PANTHER" id="PTHR43060">
    <property type="entry name" value="3-HYDROXYISOBUTYRATE DEHYDROGENASE-LIKE 1, MITOCHONDRIAL-RELATED"/>
    <property type="match status" value="1"/>
</dbReference>
<dbReference type="PANTHER" id="PTHR43060:SF15">
    <property type="entry name" value="3-HYDROXYISOBUTYRATE DEHYDROGENASE-LIKE 1, MITOCHONDRIAL-RELATED"/>
    <property type="match status" value="1"/>
</dbReference>
<dbReference type="Pfam" id="PF14833">
    <property type="entry name" value="NAD_binding_11"/>
    <property type="match status" value="1"/>
</dbReference>
<dbReference type="Pfam" id="PF03446">
    <property type="entry name" value="NAD_binding_2"/>
    <property type="match status" value="1"/>
</dbReference>
<dbReference type="PIRSF" id="PIRSF000103">
    <property type="entry name" value="HIBADH"/>
    <property type="match status" value="1"/>
</dbReference>
<dbReference type="SUPFAM" id="SSF48179">
    <property type="entry name" value="6-phosphogluconate dehydrogenase C-terminal domain-like"/>
    <property type="match status" value="1"/>
</dbReference>
<dbReference type="SUPFAM" id="SSF51735">
    <property type="entry name" value="NAD(P)-binding Rossmann-fold domains"/>
    <property type="match status" value="1"/>
</dbReference>
<dbReference type="PROSITE" id="PS00895">
    <property type="entry name" value="3_HYDROXYISOBUT_DH"/>
    <property type="match status" value="1"/>
</dbReference>
<comment type="catalytic activity">
    <reaction>
        <text>(R)-glycerate + NADP(+) = 2-hydroxy-3-oxopropanoate + NADPH + H(+)</text>
        <dbReference type="Rhea" id="RHEA:18841"/>
        <dbReference type="ChEBI" id="CHEBI:15378"/>
        <dbReference type="ChEBI" id="CHEBI:16659"/>
        <dbReference type="ChEBI" id="CHEBI:57783"/>
        <dbReference type="ChEBI" id="CHEBI:57978"/>
        <dbReference type="ChEBI" id="CHEBI:58349"/>
        <dbReference type="EC" id="1.1.1.60"/>
    </reaction>
</comment>
<comment type="catalytic activity">
    <reaction>
        <text>(R)-glycerate + NAD(+) = 2-hydroxy-3-oxopropanoate + NADH + H(+)</text>
        <dbReference type="Rhea" id="RHEA:18845"/>
        <dbReference type="ChEBI" id="CHEBI:15378"/>
        <dbReference type="ChEBI" id="CHEBI:16659"/>
        <dbReference type="ChEBI" id="CHEBI:57540"/>
        <dbReference type="ChEBI" id="CHEBI:57945"/>
        <dbReference type="ChEBI" id="CHEBI:57978"/>
        <dbReference type="EC" id="1.1.1.60"/>
    </reaction>
</comment>
<comment type="pathway">
    <text>Organic acid metabolism; glycolate degradation; 3-phospho-D-glycerate from glycolate: step 3/4.</text>
</comment>
<comment type="induction">
    <text>By glyoxylate.</text>
</comment>
<comment type="similarity">
    <text evidence="2">Belongs to the HIBADH-related family.</text>
</comment>
<proteinExistence type="evidence at transcript level"/>
<protein>
    <recommendedName>
        <fullName>2-hydroxy-3-oxopropionate reductase</fullName>
        <ecNumber>1.1.1.60</ecNumber>
    </recommendedName>
    <alternativeName>
        <fullName>Tartronate semialdehyde reductase</fullName>
        <shortName>TSAR</shortName>
    </alternativeName>
</protein>
<sequence>MKLGFIGLGIMGTPMAINLARAGHQLHVTTIGPVADELLSLGAVSVETARQVTEASDIIFIMVPDTPQVEEVLFGENGCTKASLKGKTIVDMSSISPIETKRFARQVNELGGDYLDAPVSGGEIGAREGTLSIMVGGDEAVFERVKPLFELLGKNITLVGGNGDGQTCKVANQIIVALNIEAVSEALLFASKAGADPVRVRQALMGGFASSRILEVHGERMIKRTFNPGFKIALHQKDLNLALQSAKALALNLPNTATCQELFNTCAANGGSQLDHSALVQALELMANHKLA</sequence>
<feature type="chain" id="PRO_0000173061" description="2-hydroxy-3-oxopropionate reductase">
    <location>
        <begin position="1"/>
        <end position="292"/>
    </location>
</feature>
<feature type="active site" evidence="1">
    <location>
        <position position="169"/>
    </location>
</feature>
<feature type="binding site" evidence="1">
    <location>
        <begin position="4"/>
        <end position="18"/>
    </location>
    <ligand>
        <name>NAD(+)</name>
        <dbReference type="ChEBI" id="CHEBI:57540"/>
    </ligand>
</feature>
<feature type="binding site" evidence="1">
    <location>
        <position position="94"/>
    </location>
    <ligand>
        <name>NAD(+)</name>
        <dbReference type="ChEBI" id="CHEBI:57540"/>
    </ligand>
</feature>
<feature type="binding site" evidence="1">
    <location>
        <position position="237"/>
    </location>
    <ligand>
        <name>NAD(+)</name>
        <dbReference type="ChEBI" id="CHEBI:57540"/>
    </ligand>
</feature>
<name>GLXR_ECOLI</name>
<gene>
    <name type="primary">glxR</name>
    <name type="synonym">glxB1</name>
    <name type="synonym">ybbQ</name>
    <name type="ordered locus">b0509</name>
    <name type="ordered locus">JW0497</name>
</gene>
<reference key="1">
    <citation type="journal article" date="1999" name="J. Bacteriol.">
        <title>Genetic analysis of a chromosomal region containing genes required for assimilation of allantoin nitrogen and linked glyoxylate metabolism in Escherichia coli.</title>
        <authorList>
            <person name="Cusa E."/>
            <person name="Obradors N."/>
            <person name="Baldoma L."/>
            <person name="Badia J."/>
            <person name="Aguilar J."/>
        </authorList>
    </citation>
    <scope>NUCLEOTIDE SEQUENCE [GENOMIC DNA]</scope>
    <scope>FUNCTION</scope>
    <source>
        <strain>K12 / ECL1</strain>
    </source>
</reference>
<reference key="2">
    <citation type="submission" date="1997-01" db="EMBL/GenBank/DDBJ databases">
        <title>Sequence of minutes 4-25 of Escherichia coli.</title>
        <authorList>
            <person name="Chung E."/>
            <person name="Allen E."/>
            <person name="Araujo R."/>
            <person name="Aparicio A.M."/>
            <person name="Davis K."/>
            <person name="Duncan M."/>
            <person name="Federspiel N."/>
            <person name="Hyman R."/>
            <person name="Kalman S."/>
            <person name="Komp C."/>
            <person name="Kurdi O."/>
            <person name="Lew H."/>
            <person name="Lin D."/>
            <person name="Namath A."/>
            <person name="Oefner P."/>
            <person name="Roberts D."/>
            <person name="Schramm S."/>
            <person name="Davis R.W."/>
        </authorList>
    </citation>
    <scope>NUCLEOTIDE SEQUENCE [LARGE SCALE GENOMIC DNA]</scope>
    <source>
        <strain>K12 / MG1655 / ATCC 47076</strain>
    </source>
</reference>
<reference key="3">
    <citation type="journal article" date="1997" name="Science">
        <title>The complete genome sequence of Escherichia coli K-12.</title>
        <authorList>
            <person name="Blattner F.R."/>
            <person name="Plunkett G. III"/>
            <person name="Bloch C.A."/>
            <person name="Perna N.T."/>
            <person name="Burland V."/>
            <person name="Riley M."/>
            <person name="Collado-Vides J."/>
            <person name="Glasner J.D."/>
            <person name="Rode C.K."/>
            <person name="Mayhew G.F."/>
            <person name="Gregor J."/>
            <person name="Davis N.W."/>
            <person name="Kirkpatrick H.A."/>
            <person name="Goeden M.A."/>
            <person name="Rose D.J."/>
            <person name="Mau B."/>
            <person name="Shao Y."/>
        </authorList>
    </citation>
    <scope>NUCLEOTIDE SEQUENCE [LARGE SCALE GENOMIC DNA]</scope>
    <source>
        <strain>K12 / MG1655 / ATCC 47076</strain>
    </source>
</reference>
<reference key="4">
    <citation type="journal article" date="2006" name="Mol. Syst. Biol.">
        <title>Highly accurate genome sequences of Escherichia coli K-12 strains MG1655 and W3110.</title>
        <authorList>
            <person name="Hayashi K."/>
            <person name="Morooka N."/>
            <person name="Yamamoto Y."/>
            <person name="Fujita K."/>
            <person name="Isono K."/>
            <person name="Choi S."/>
            <person name="Ohtsubo E."/>
            <person name="Baba T."/>
            <person name="Wanner B.L."/>
            <person name="Mori H."/>
            <person name="Horiuchi T."/>
        </authorList>
    </citation>
    <scope>NUCLEOTIDE SEQUENCE [LARGE SCALE GENOMIC DNA]</scope>
    <source>
        <strain>K12 / W3110 / ATCC 27325 / DSM 5911</strain>
    </source>
</reference>
<organism>
    <name type="scientific">Escherichia coli (strain K12)</name>
    <dbReference type="NCBI Taxonomy" id="83333"/>
    <lineage>
        <taxon>Bacteria</taxon>
        <taxon>Pseudomonadati</taxon>
        <taxon>Pseudomonadota</taxon>
        <taxon>Gammaproteobacteria</taxon>
        <taxon>Enterobacterales</taxon>
        <taxon>Enterobacteriaceae</taxon>
        <taxon>Escherichia</taxon>
    </lineage>
</organism>
<evidence type="ECO:0000250" key="1"/>
<evidence type="ECO:0000305" key="2"/>